<keyword id="KW-1003">Cell membrane</keyword>
<keyword id="KW-0325">Glycoprotein</keyword>
<keyword id="KW-0433">Leucine-rich repeat</keyword>
<keyword id="KW-0472">Membrane</keyword>
<keyword id="KW-0675">Receptor</keyword>
<keyword id="KW-1185">Reference proteome</keyword>
<keyword id="KW-0677">Repeat</keyword>
<keyword id="KW-0732">Signal</keyword>
<keyword id="KW-0812">Transmembrane</keyword>
<keyword id="KW-1133">Transmembrane helix</keyword>
<comment type="subcellular location">
    <subcellularLocation>
        <location evidence="4">Cell membrane</location>
        <topology evidence="4">Single-pass type I membrane protein</topology>
    </subcellularLocation>
</comment>
<comment type="similarity">
    <text evidence="4">Belongs to the RLP family.</text>
</comment>
<proteinExistence type="evidence at transcript level"/>
<protein>
    <recommendedName>
        <fullName evidence="3">Receptor like protein 29</fullName>
        <shortName evidence="3">AtRLP29</shortName>
    </recommendedName>
</protein>
<dbReference type="EMBL" id="AC006931">
    <property type="protein sequence ID" value="AAD21728.1"/>
    <property type="molecule type" value="Genomic_DNA"/>
</dbReference>
<dbReference type="EMBL" id="CP002685">
    <property type="protein sequence ID" value="AEC10170.1"/>
    <property type="molecule type" value="Genomic_DNA"/>
</dbReference>
<dbReference type="EMBL" id="BT023464">
    <property type="protein sequence ID" value="AAY56455.1"/>
    <property type="molecule type" value="mRNA"/>
</dbReference>
<dbReference type="PIR" id="D84858">
    <property type="entry name" value="D84858"/>
</dbReference>
<dbReference type="RefSeq" id="NP_181808.1">
    <property type="nucleotide sequence ID" value="NM_129841.4"/>
</dbReference>
<dbReference type="SMR" id="Q9SJH6"/>
<dbReference type="FunCoup" id="Q9SJH6">
    <property type="interactions" value="230"/>
</dbReference>
<dbReference type="STRING" id="3702.Q9SJH6"/>
<dbReference type="GlyCosmos" id="Q9SJH6">
    <property type="glycosylation" value="4 sites, No reported glycans"/>
</dbReference>
<dbReference type="GlyGen" id="Q9SJH6">
    <property type="glycosylation" value="4 sites"/>
</dbReference>
<dbReference type="PaxDb" id="3702-AT2G42800.1"/>
<dbReference type="ProteomicsDB" id="227987"/>
<dbReference type="EnsemblPlants" id="AT2G42800.1">
    <property type="protein sequence ID" value="AT2G42800.1"/>
    <property type="gene ID" value="AT2G42800"/>
</dbReference>
<dbReference type="GeneID" id="818880"/>
<dbReference type="Gramene" id="AT2G42800.1">
    <property type="protein sequence ID" value="AT2G42800.1"/>
    <property type="gene ID" value="AT2G42800"/>
</dbReference>
<dbReference type="KEGG" id="ath:AT2G42800"/>
<dbReference type="Araport" id="AT2G42800"/>
<dbReference type="TAIR" id="AT2G42800">
    <property type="gene designation" value="RLP29"/>
</dbReference>
<dbReference type="eggNOG" id="KOG0619">
    <property type="taxonomic scope" value="Eukaryota"/>
</dbReference>
<dbReference type="HOGENOM" id="CLU_000288_18_25_1"/>
<dbReference type="InParanoid" id="Q9SJH6"/>
<dbReference type="OMA" id="PSCKDTA"/>
<dbReference type="PhylomeDB" id="Q9SJH6"/>
<dbReference type="PRO" id="PR:Q9SJH6"/>
<dbReference type="Proteomes" id="UP000006548">
    <property type="component" value="Chromosome 2"/>
</dbReference>
<dbReference type="ExpressionAtlas" id="Q9SJH6">
    <property type="expression patterns" value="baseline and differential"/>
</dbReference>
<dbReference type="GO" id="GO:0005886">
    <property type="term" value="C:plasma membrane"/>
    <property type="evidence" value="ECO:0007669"/>
    <property type="project" value="UniProtKB-SubCell"/>
</dbReference>
<dbReference type="FunFam" id="3.80.10.10:FF:000269">
    <property type="entry name" value="Piriformospora indica-insensitive protein 2"/>
    <property type="match status" value="1"/>
</dbReference>
<dbReference type="FunFam" id="3.80.10.10:FF:000833">
    <property type="entry name" value="Protein TOO MANY MOUTHS"/>
    <property type="match status" value="1"/>
</dbReference>
<dbReference type="Gene3D" id="3.80.10.10">
    <property type="entry name" value="Ribonuclease Inhibitor"/>
    <property type="match status" value="3"/>
</dbReference>
<dbReference type="InterPro" id="IPR001611">
    <property type="entry name" value="Leu-rich_rpt"/>
</dbReference>
<dbReference type="InterPro" id="IPR003591">
    <property type="entry name" value="Leu-rich_rpt_typical-subtyp"/>
</dbReference>
<dbReference type="InterPro" id="IPR032675">
    <property type="entry name" value="LRR_dom_sf"/>
</dbReference>
<dbReference type="InterPro" id="IPR053038">
    <property type="entry name" value="RLP_Defense"/>
</dbReference>
<dbReference type="PANTHER" id="PTHR48064">
    <property type="entry name" value="OS01G0750400 PROTEIN"/>
    <property type="match status" value="1"/>
</dbReference>
<dbReference type="PANTHER" id="PTHR48064:SF6">
    <property type="entry name" value="RECEPTOR-LIKE PROTEIN KINASE 2"/>
    <property type="match status" value="1"/>
</dbReference>
<dbReference type="Pfam" id="PF00560">
    <property type="entry name" value="LRR_1"/>
    <property type="match status" value="1"/>
</dbReference>
<dbReference type="Pfam" id="PF13855">
    <property type="entry name" value="LRR_8"/>
    <property type="match status" value="2"/>
</dbReference>
<dbReference type="PRINTS" id="PR00019">
    <property type="entry name" value="LEURICHRPT"/>
</dbReference>
<dbReference type="SMART" id="SM00369">
    <property type="entry name" value="LRR_TYP"/>
    <property type="match status" value="4"/>
</dbReference>
<dbReference type="SUPFAM" id="SSF52058">
    <property type="entry name" value="L domain-like"/>
    <property type="match status" value="1"/>
</dbReference>
<feature type="signal peptide" evidence="1">
    <location>
        <begin position="1"/>
        <end position="26"/>
    </location>
</feature>
<feature type="chain" id="PRO_5011951309" description="Receptor like protein 29">
    <location>
        <begin position="27"/>
        <end position="462"/>
    </location>
</feature>
<feature type="topological domain" description="Extracellular" evidence="1">
    <location>
        <begin position="27"/>
        <end position="441"/>
    </location>
</feature>
<feature type="transmembrane region" description="Helical" evidence="1">
    <location>
        <begin position="442"/>
        <end position="462"/>
    </location>
</feature>
<feature type="repeat" description="LRR 1" evidence="1">
    <location>
        <begin position="139"/>
        <end position="164"/>
    </location>
</feature>
<feature type="repeat" description="LRR 2" evidence="1">
    <location>
        <begin position="165"/>
        <end position="188"/>
    </location>
</feature>
<feature type="repeat" description="LRR 3" evidence="1">
    <location>
        <begin position="190"/>
        <end position="212"/>
    </location>
</feature>
<feature type="repeat" description="LRR 4" evidence="1">
    <location>
        <begin position="213"/>
        <end position="236"/>
    </location>
</feature>
<feature type="repeat" description="LRR 5" evidence="1">
    <location>
        <begin position="238"/>
        <end position="260"/>
    </location>
</feature>
<feature type="repeat" description="LRR 6" evidence="1">
    <location>
        <begin position="261"/>
        <end position="284"/>
    </location>
</feature>
<feature type="repeat" description="LRR 7" evidence="1">
    <location>
        <begin position="286"/>
        <end position="308"/>
    </location>
</feature>
<feature type="repeat" description="LRR 8" evidence="1">
    <location>
        <begin position="309"/>
        <end position="331"/>
    </location>
</feature>
<feature type="repeat" description="LRR 9" evidence="1">
    <location>
        <begin position="332"/>
        <end position="355"/>
    </location>
</feature>
<feature type="repeat" description="LRR 10" evidence="1">
    <location>
        <begin position="357"/>
        <end position="381"/>
    </location>
</feature>
<feature type="glycosylation site" description="N-linked (GlcNAc...) asparagine" evidence="2">
    <location>
        <position position="139"/>
    </location>
</feature>
<feature type="glycosylation site" description="N-linked (GlcNAc...) asparagine" evidence="2">
    <location>
        <position position="334"/>
    </location>
</feature>
<feature type="glycosylation site" description="N-linked (GlcNAc...) asparagine" evidence="2">
    <location>
        <position position="363"/>
    </location>
</feature>
<feature type="glycosylation site" description="N-linked (GlcNAc...) asparagine" evidence="2">
    <location>
        <position position="416"/>
    </location>
</feature>
<name>RLP29_ARATH</name>
<sequence length="462" mass="50801">MTMKRALPSPSSLLFFFLLITPLFLCQENRVSASMPPSESETLFKIMESMSSDQQWRQSHPNPCAPGSSWPGIECKTGPDHLSHVSRLDFGSAPNPSCKSSASFPSSIFTLPFLQSVFFFNCFTHFPTTIMFPIKLIPNSSLQQLSLRSNPSLSGQIPPRISSLKSLQILTLSQNRLTGDIPPAIFSLKSLVHLDLSYNKLTGKIPLQLGNLNNLVGLDLSYNSLTGTIPPTISQLGMLQKLDLSSNSLFGRIPEGVEKLRSLSFMALSNNKLKGAFPKGISNLQSLQYFIMDNNPMFVALPVELGFLPKLQELQLENSGYSGVIPESYTKLTNLSSLSLANNRLTGEIPSGFESLPHVFHLNLSRNLLIGVVPFDSSFLRRLGKNLDLSGNRGLCLNPEDEFSVVKTGVDVCGKNVSSGGGLSVHSSKKKSQASRYYRSCFFANALFPFALFLGLHQRWVL</sequence>
<gene>
    <name evidence="3" type="primary">RLP29</name>
    <name evidence="5" type="ordered locus">At2g42800</name>
    <name evidence="6" type="ORF">F7D19.20</name>
</gene>
<reference key="1">
    <citation type="journal article" date="1999" name="Nature">
        <title>Sequence and analysis of chromosome 2 of the plant Arabidopsis thaliana.</title>
        <authorList>
            <person name="Lin X."/>
            <person name="Kaul S."/>
            <person name="Rounsley S.D."/>
            <person name="Shea T.P."/>
            <person name="Benito M.-I."/>
            <person name="Town C.D."/>
            <person name="Fujii C.Y."/>
            <person name="Mason T.M."/>
            <person name="Bowman C.L."/>
            <person name="Barnstead M.E."/>
            <person name="Feldblyum T.V."/>
            <person name="Buell C.R."/>
            <person name="Ketchum K.A."/>
            <person name="Lee J.J."/>
            <person name="Ronning C.M."/>
            <person name="Koo H.L."/>
            <person name="Moffat K.S."/>
            <person name="Cronin L.A."/>
            <person name="Shen M."/>
            <person name="Pai G."/>
            <person name="Van Aken S."/>
            <person name="Umayam L."/>
            <person name="Tallon L.J."/>
            <person name="Gill J.E."/>
            <person name="Adams M.D."/>
            <person name="Carrera A.J."/>
            <person name="Creasy T.H."/>
            <person name="Goodman H.M."/>
            <person name="Somerville C.R."/>
            <person name="Copenhaver G.P."/>
            <person name="Preuss D."/>
            <person name="Nierman W.C."/>
            <person name="White O."/>
            <person name="Eisen J.A."/>
            <person name="Salzberg S.L."/>
            <person name="Fraser C.M."/>
            <person name="Venter J.C."/>
        </authorList>
    </citation>
    <scope>NUCLEOTIDE SEQUENCE [LARGE SCALE GENOMIC DNA]</scope>
    <source>
        <strain>cv. Columbia</strain>
    </source>
</reference>
<reference key="2">
    <citation type="journal article" date="2017" name="Plant J.">
        <title>Araport11: a complete reannotation of the Arabidopsis thaliana reference genome.</title>
        <authorList>
            <person name="Cheng C.Y."/>
            <person name="Krishnakumar V."/>
            <person name="Chan A.P."/>
            <person name="Thibaud-Nissen F."/>
            <person name="Schobel S."/>
            <person name="Town C.D."/>
        </authorList>
    </citation>
    <scope>GENOME REANNOTATION</scope>
    <source>
        <strain>cv. Columbia</strain>
    </source>
</reference>
<reference key="3">
    <citation type="submission" date="2005-05" db="EMBL/GenBank/DDBJ databases">
        <title>Arabidopsis ORF clones.</title>
        <authorList>
            <person name="Cheuk R.F."/>
            <person name="Chen H."/>
            <person name="Kim C.J."/>
            <person name="Shinn P."/>
            <person name="Ecker J.R."/>
        </authorList>
    </citation>
    <scope>NUCLEOTIDE SEQUENCE [LARGE SCALE MRNA]</scope>
    <source>
        <strain>cv. Columbia</strain>
    </source>
</reference>
<reference key="4">
    <citation type="journal article" date="2005" name="Plant Physiol.">
        <title>Phylogenomic analysis of the receptor-like proteins of rice and Arabidopsis.</title>
        <authorList>
            <person name="Fritz-Laylin L.K."/>
            <person name="Krishnamurthy N."/>
            <person name="Toer M."/>
            <person name="Sjoelander K.V."/>
            <person name="Jones J.D."/>
        </authorList>
    </citation>
    <scope>GENE FAMILY</scope>
</reference>
<reference key="5">
    <citation type="journal article" date="2008" name="Plant Physiol.">
        <title>A genome-wide functional investigation into the roles of receptor-like proteins in Arabidopsis.</title>
        <authorList>
            <person name="Wang G."/>
            <person name="Ellendorff U."/>
            <person name="Kemp B."/>
            <person name="Mansfield J.W."/>
            <person name="Forsyth A."/>
            <person name="Mitchell K."/>
            <person name="Bastas K."/>
            <person name="Liu C.-M."/>
            <person name="Woods-Toer A."/>
            <person name="Zipfel C."/>
            <person name="de Wit P.J.G.M."/>
            <person name="Jones J.D.G."/>
            <person name="Toer M."/>
            <person name="Thomma B.P.H.J."/>
        </authorList>
    </citation>
    <scope>GENE FAMILY</scope>
    <scope>NOMENCLATURE</scope>
</reference>
<organism>
    <name type="scientific">Arabidopsis thaliana</name>
    <name type="common">Mouse-ear cress</name>
    <dbReference type="NCBI Taxonomy" id="3702"/>
    <lineage>
        <taxon>Eukaryota</taxon>
        <taxon>Viridiplantae</taxon>
        <taxon>Streptophyta</taxon>
        <taxon>Embryophyta</taxon>
        <taxon>Tracheophyta</taxon>
        <taxon>Spermatophyta</taxon>
        <taxon>Magnoliopsida</taxon>
        <taxon>eudicotyledons</taxon>
        <taxon>Gunneridae</taxon>
        <taxon>Pentapetalae</taxon>
        <taxon>rosids</taxon>
        <taxon>malvids</taxon>
        <taxon>Brassicales</taxon>
        <taxon>Brassicaceae</taxon>
        <taxon>Camelineae</taxon>
        <taxon>Arabidopsis</taxon>
    </lineage>
</organism>
<evidence type="ECO:0000255" key="1"/>
<evidence type="ECO:0000255" key="2">
    <source>
        <dbReference type="PROSITE-ProRule" id="PRU00498"/>
    </source>
</evidence>
<evidence type="ECO:0000303" key="3">
    <source>
    </source>
</evidence>
<evidence type="ECO:0000305" key="4"/>
<evidence type="ECO:0000312" key="5">
    <source>
        <dbReference type="Araport" id="AT2G42800"/>
    </source>
</evidence>
<evidence type="ECO:0000312" key="6">
    <source>
        <dbReference type="EMBL" id="AAD21728.1"/>
    </source>
</evidence>
<accession>Q9SJH6</accession>